<name>TIAS_METAC</name>
<sequence length="428" mass="47778">MIIGIDDTDSNEGMCTTYLGALLLEELQEYGTVETLPLLVRLNPTIPYKTRGNAAIALKLKTDCPEKIIAHVTSRIEEFARMECEKTNPGAVFIQEKDYRSLKPILLSFLEKAVKDVIEIETAKHLISELGISSKSFKNGRGLIGALAACGAMLNPEKWDCTFEHLAYRQKKKWGSPRDVNKDSFFEADRQTYPGTWDTVDLANRLVVCVPHSADPVLFGIRGESPELVSKAASLIRSEPVERFAVYRTNQGTDMHLLPAASISEIRDMHSYRFEGTVSAVPKTIEGGHVIFAVRDGKGDEIDCAAFEPTKNFRVLARRLLLGDQIFLSGSVTSGTLNIEKMQVKELVLLYREENPKCPECGKHMKSAGQGQGFRCKKCGTRASSKIRCEAERDLEPGLYEVPPCARRHLAKPLARERDQNIRIHPSR</sequence>
<keyword id="KW-0067">ATP-binding</keyword>
<keyword id="KW-0963">Cytoplasm</keyword>
<keyword id="KW-0436">Ligase</keyword>
<keyword id="KW-0547">Nucleotide-binding</keyword>
<keyword id="KW-1185">Reference proteome</keyword>
<keyword id="KW-0819">tRNA processing</keyword>
<protein>
    <recommendedName>
        <fullName evidence="1">tRNA(Ile2) 2-agmatinylcytidine synthetase TiaS</fullName>
        <shortName evidence="1">tRNA(Ile2)-agm2C synthetase</shortName>
        <ecNumber evidence="1">6.3.4.22</ecNumber>
    </recommendedName>
    <alternativeName>
        <fullName evidence="1">tRNA(Ile2) agmatidine synthetase</fullName>
    </alternativeName>
</protein>
<proteinExistence type="inferred from homology"/>
<accession>Q8TK89</accession>
<comment type="function">
    <text evidence="1">ATP-dependent agmatine transferase that catalyzes the formation of 2-agmatinylcytidine (agm2C) at the wobble position (C34) of tRNA(Ile2), converting the codon specificity from AUG to AUA.</text>
</comment>
<comment type="catalytic activity">
    <reaction evidence="1">
        <text>cytidine(34) in tRNA(Ile2) + agmatine + ATP + H2O = 2-agmatinylcytidine(34) in tRNA(Ile2) + AMP + 2 phosphate + 2 H(+)</text>
        <dbReference type="Rhea" id="RHEA:43608"/>
        <dbReference type="Rhea" id="RHEA-COMP:10625"/>
        <dbReference type="Rhea" id="RHEA-COMP:10626"/>
        <dbReference type="ChEBI" id="CHEBI:15377"/>
        <dbReference type="ChEBI" id="CHEBI:15378"/>
        <dbReference type="ChEBI" id="CHEBI:30616"/>
        <dbReference type="ChEBI" id="CHEBI:43474"/>
        <dbReference type="ChEBI" id="CHEBI:58145"/>
        <dbReference type="ChEBI" id="CHEBI:82748"/>
        <dbReference type="ChEBI" id="CHEBI:83545"/>
        <dbReference type="ChEBI" id="CHEBI:456215"/>
        <dbReference type="EC" id="6.3.4.22"/>
    </reaction>
</comment>
<comment type="subcellular location">
    <subcellularLocation>
        <location evidence="1">Cytoplasm</location>
    </subcellularLocation>
</comment>
<comment type="similarity">
    <text evidence="1">Belongs to the TiaS family.</text>
</comment>
<comment type="sequence caution" evidence="2">
    <conflict type="erroneous initiation">
        <sequence resource="EMBL-CDS" id="AAM06888"/>
    </conflict>
    <text>Extended N-terminus.</text>
</comment>
<reference key="1">
    <citation type="journal article" date="2002" name="Genome Res.">
        <title>The genome of Methanosarcina acetivorans reveals extensive metabolic and physiological diversity.</title>
        <authorList>
            <person name="Galagan J.E."/>
            <person name="Nusbaum C."/>
            <person name="Roy A."/>
            <person name="Endrizzi M.G."/>
            <person name="Macdonald P."/>
            <person name="FitzHugh W."/>
            <person name="Calvo S."/>
            <person name="Engels R."/>
            <person name="Smirnov S."/>
            <person name="Atnoor D."/>
            <person name="Brown A."/>
            <person name="Allen N."/>
            <person name="Naylor J."/>
            <person name="Stange-Thomann N."/>
            <person name="DeArellano K."/>
            <person name="Johnson R."/>
            <person name="Linton L."/>
            <person name="McEwan P."/>
            <person name="McKernan K."/>
            <person name="Talamas J."/>
            <person name="Tirrell A."/>
            <person name="Ye W."/>
            <person name="Zimmer A."/>
            <person name="Barber R.D."/>
            <person name="Cann I."/>
            <person name="Graham D.E."/>
            <person name="Grahame D.A."/>
            <person name="Guss A.M."/>
            <person name="Hedderich R."/>
            <person name="Ingram-Smith C."/>
            <person name="Kuettner H.C."/>
            <person name="Krzycki J.A."/>
            <person name="Leigh J.A."/>
            <person name="Li W."/>
            <person name="Liu J."/>
            <person name="Mukhopadhyay B."/>
            <person name="Reeve J.N."/>
            <person name="Smith K."/>
            <person name="Springer T.A."/>
            <person name="Umayam L.A."/>
            <person name="White O."/>
            <person name="White R.H."/>
            <person name="de Macario E.C."/>
            <person name="Ferry J.G."/>
            <person name="Jarrell K.F."/>
            <person name="Jing H."/>
            <person name="Macario A.J.L."/>
            <person name="Paulsen I.T."/>
            <person name="Pritchett M."/>
            <person name="Sowers K.R."/>
            <person name="Swanson R.V."/>
            <person name="Zinder S.H."/>
            <person name="Lander E."/>
            <person name="Metcalf W.W."/>
            <person name="Birren B."/>
        </authorList>
    </citation>
    <scope>NUCLEOTIDE SEQUENCE [LARGE SCALE GENOMIC DNA]</scope>
    <source>
        <strain>ATCC 35395 / DSM 2834 / JCM 12185 / C2A</strain>
    </source>
</reference>
<dbReference type="EC" id="6.3.4.22" evidence="1"/>
<dbReference type="EMBL" id="AE010299">
    <property type="protein sequence ID" value="AAM06888.1"/>
    <property type="status" value="ALT_INIT"/>
    <property type="molecule type" value="Genomic_DNA"/>
</dbReference>
<dbReference type="RefSeq" id="WP_048066507.1">
    <property type="nucleotide sequence ID" value="NC_003552.1"/>
</dbReference>
<dbReference type="SMR" id="Q8TK89"/>
<dbReference type="FunCoup" id="Q8TK89">
    <property type="interactions" value="2"/>
</dbReference>
<dbReference type="STRING" id="188937.MA_3525"/>
<dbReference type="EnsemblBacteria" id="AAM06888">
    <property type="protein sequence ID" value="AAM06888"/>
    <property type="gene ID" value="MA_3525"/>
</dbReference>
<dbReference type="GeneID" id="1475419"/>
<dbReference type="KEGG" id="mac:MA_3525"/>
<dbReference type="HOGENOM" id="CLU_675459_0_0_2"/>
<dbReference type="InParanoid" id="Q8TK89"/>
<dbReference type="OrthoDB" id="39189at2157"/>
<dbReference type="Proteomes" id="UP000002487">
    <property type="component" value="Chromosome"/>
</dbReference>
<dbReference type="GO" id="GO:0005737">
    <property type="term" value="C:cytoplasm"/>
    <property type="evidence" value="ECO:0007669"/>
    <property type="project" value="UniProtKB-SubCell"/>
</dbReference>
<dbReference type="GO" id="GO:0005524">
    <property type="term" value="F:ATP binding"/>
    <property type="evidence" value="ECO:0007669"/>
    <property type="project" value="UniProtKB-KW"/>
</dbReference>
<dbReference type="GO" id="GO:0016879">
    <property type="term" value="F:ligase activity, forming carbon-nitrogen bonds"/>
    <property type="evidence" value="ECO:0007669"/>
    <property type="project" value="UniProtKB-UniRule"/>
</dbReference>
<dbReference type="GO" id="GO:0002101">
    <property type="term" value="P:tRNA wobble cytosine modification"/>
    <property type="evidence" value="ECO:0007669"/>
    <property type="project" value="UniProtKB-UniRule"/>
</dbReference>
<dbReference type="CDD" id="cd04482">
    <property type="entry name" value="RPA2_OBF_like"/>
    <property type="match status" value="1"/>
</dbReference>
<dbReference type="Gene3D" id="2.40.50.1010">
    <property type="match status" value="1"/>
</dbReference>
<dbReference type="Gene3D" id="3.30.70.2200">
    <property type="match status" value="1"/>
</dbReference>
<dbReference type="Gene3D" id="3.90.600.20">
    <property type="match status" value="1"/>
</dbReference>
<dbReference type="HAMAP" id="MF_01892">
    <property type="entry name" value="tRNA_Ile2_agm2C_synt"/>
    <property type="match status" value="1"/>
</dbReference>
<dbReference type="InterPro" id="IPR053870">
    <property type="entry name" value="TiaS-like_TCKD"/>
</dbReference>
<dbReference type="InterPro" id="IPR013696">
    <property type="entry name" value="TiaS_FLD"/>
</dbReference>
<dbReference type="InterPro" id="IPR024913">
    <property type="entry name" value="tRNA_Ile2__agm2C_synt"/>
</dbReference>
<dbReference type="InterPro" id="IPR055394">
    <property type="entry name" value="Zn_ribbon_TiaS"/>
</dbReference>
<dbReference type="PANTHER" id="PTHR40705">
    <property type="entry name" value="TRNA(ILE2) 2-AGMATINYLCYTIDINE SYNTHETASE TIAS"/>
    <property type="match status" value="1"/>
</dbReference>
<dbReference type="PANTHER" id="PTHR40705:SF1">
    <property type="entry name" value="TRNA(ILE2) 2-AGMATINYLCYTIDINE SYNTHETASE TIAS"/>
    <property type="match status" value="1"/>
</dbReference>
<dbReference type="Pfam" id="PF08489">
    <property type="entry name" value="TiaS_FLD"/>
    <property type="match status" value="1"/>
</dbReference>
<dbReference type="Pfam" id="PF22641">
    <property type="entry name" value="TiaS_TCKD"/>
    <property type="match status" value="1"/>
</dbReference>
<dbReference type="Pfam" id="PF23783">
    <property type="entry name" value="Zn_ribbon_TiaS"/>
    <property type="match status" value="1"/>
</dbReference>
<gene>
    <name evidence="1" type="primary">tiaS</name>
    <name type="ordered locus">MA_3525</name>
</gene>
<evidence type="ECO:0000255" key="1">
    <source>
        <dbReference type="HAMAP-Rule" id="MF_01892"/>
    </source>
</evidence>
<evidence type="ECO:0000305" key="2"/>
<feature type="chain" id="PRO_0000407298" description="tRNA(Ile2) 2-agmatinylcytidine synthetase TiaS">
    <location>
        <begin position="1"/>
        <end position="428"/>
    </location>
</feature>
<organism>
    <name type="scientific">Methanosarcina acetivorans (strain ATCC 35395 / DSM 2834 / JCM 12185 / C2A)</name>
    <dbReference type="NCBI Taxonomy" id="188937"/>
    <lineage>
        <taxon>Archaea</taxon>
        <taxon>Methanobacteriati</taxon>
        <taxon>Methanobacteriota</taxon>
        <taxon>Stenosarchaea group</taxon>
        <taxon>Methanomicrobia</taxon>
        <taxon>Methanosarcinales</taxon>
        <taxon>Methanosarcinaceae</taxon>
        <taxon>Methanosarcina</taxon>
    </lineage>
</organism>